<sequence>MPRYVPLLLLLLLLRCSERGGGVNFGEKDAKVPGTWRDGVRVPGEGASWDSDRASPERRYGIVGLSQSISTKHPETSPKDSRIRENDVTADGRTTEDHITADPGTTEDSVTADPGTTEDNVTVDPGTTEGSVTADPATTKDYVSADPGTTKDSVTADPGTTENFVTADPGTTKDSITADPRTTEDSVTADPGTTKHSITVDPGTTEDSVTADPGTTKHSITADPGTTEDSVTADPGTTEDETTKHGDTHLL</sequence>
<gene>
    <name type="primary">HCG22</name>
    <name type="synonym">G2</name>
    <name type="synonym">PBMUCL2</name>
</gene>
<accession>E2RYF7</accession>
<proteinExistence type="evidence at transcript level"/>
<evidence type="ECO:0000255" key="1"/>
<evidence type="ECO:0000256" key="2">
    <source>
        <dbReference type="SAM" id="MobiDB-lite"/>
    </source>
</evidence>
<evidence type="ECO:0000269" key="3">
    <source>
    </source>
</evidence>
<evidence type="ECO:0000305" key="4"/>
<dbReference type="EMBL" id="AB560771">
    <property type="protein sequence ID" value="BAJ24155.1"/>
    <property type="molecule type" value="mRNA"/>
</dbReference>
<dbReference type="EMBL" id="CR759772">
    <property type="status" value="NOT_ANNOTATED_CDS"/>
    <property type="molecule type" value="Genomic_DNA"/>
</dbReference>
<dbReference type="RefSeq" id="NP_001335178.1">
    <property type="nucleotide sequence ID" value="NM_001348249.1"/>
</dbReference>
<dbReference type="GlyCosmos" id="E2RYF7">
    <property type="glycosylation" value="1 site, No reported glycans"/>
</dbReference>
<dbReference type="GlyGen" id="E2RYF7">
    <property type="glycosylation" value="1 site"/>
</dbReference>
<dbReference type="BioMuta" id="HGNC:27780"/>
<dbReference type="jPOST" id="E2RYF7"/>
<dbReference type="PeptideAtlas" id="E2RYF7"/>
<dbReference type="ProteomicsDB" id="15280"/>
<dbReference type="DNASU" id="285834"/>
<dbReference type="AGR" id="HGNC:27780"/>
<dbReference type="DisGeNET" id="285834"/>
<dbReference type="GeneCards" id="HCG22"/>
<dbReference type="HGNC" id="HGNC:27780">
    <property type="gene designation" value="HCG22"/>
</dbReference>
<dbReference type="MIM" id="613918">
    <property type="type" value="gene"/>
</dbReference>
<dbReference type="neXtProt" id="NX_E2RYF7"/>
<dbReference type="InParanoid" id="E2RYF7"/>
<dbReference type="OrthoDB" id="9751507at2759"/>
<dbReference type="PAN-GO" id="E2RYF7">
    <property type="GO annotations" value="0 GO annotations based on evolutionary models"/>
</dbReference>
<dbReference type="PathwayCommons" id="E2RYF7"/>
<dbReference type="GenomeRNAi" id="285834"/>
<dbReference type="Pharos" id="E2RYF7">
    <property type="development level" value="Tdark"/>
</dbReference>
<dbReference type="PRO" id="PR:E2RYF7"/>
<dbReference type="Proteomes" id="UP000005640">
    <property type="component" value="Unplaced"/>
</dbReference>
<dbReference type="RNAct" id="E2RYF7">
    <property type="molecule type" value="protein"/>
</dbReference>
<dbReference type="GO" id="GO:0005576">
    <property type="term" value="C:extracellular region"/>
    <property type="evidence" value="ECO:0007669"/>
    <property type="project" value="UniProtKB-SubCell"/>
</dbReference>
<dbReference type="InterPro" id="IPR052882">
    <property type="entry name" value="EZH_Inhibitor"/>
</dbReference>
<dbReference type="PANTHER" id="PTHR22467">
    <property type="entry name" value="EZH INHIBITORY PROTEIN-RELATED"/>
    <property type="match status" value="1"/>
</dbReference>
<dbReference type="PANTHER" id="PTHR22467:SF4">
    <property type="entry name" value="PROTEIN PBMUCL2"/>
    <property type="match status" value="1"/>
</dbReference>
<name>PBMU2_HUMAN</name>
<organism>
    <name type="scientific">Homo sapiens</name>
    <name type="common">Human</name>
    <dbReference type="NCBI Taxonomy" id="9606"/>
    <lineage>
        <taxon>Eukaryota</taxon>
        <taxon>Metazoa</taxon>
        <taxon>Chordata</taxon>
        <taxon>Craniata</taxon>
        <taxon>Vertebrata</taxon>
        <taxon>Euteleostomi</taxon>
        <taxon>Mammalia</taxon>
        <taxon>Eutheria</taxon>
        <taxon>Euarchontoglires</taxon>
        <taxon>Primates</taxon>
        <taxon>Haplorrhini</taxon>
        <taxon>Catarrhini</taxon>
        <taxon>Hominidae</taxon>
        <taxon>Homo</taxon>
    </lineage>
</organism>
<keyword id="KW-0325">Glycoprotein</keyword>
<keyword id="KW-1185">Reference proteome</keyword>
<keyword id="KW-0677">Repeat</keyword>
<keyword id="KW-0964">Secreted</keyword>
<keyword id="KW-0732">Signal</keyword>
<reference key="1">
    <citation type="journal article" date="2011" name="Hum. Genet.">
        <title>Molecular cloning of two novel mucin-like genes in the disease-susceptibility locus for diffuse panbronchiolitis.</title>
        <authorList>
            <person name="Hijikata M."/>
            <person name="Matsushita I."/>
            <person name="Tanaka G."/>
            <person name="Tsuchiya T."/>
            <person name="Itoh H."/>
            <person name="Tokunaga K."/>
            <person name="Ohashi J."/>
            <person name="Homma S."/>
            <person name="Kobashi Y."/>
            <person name="Taguchi Y."/>
            <person name="Azuma A."/>
            <person name="Kudoh S."/>
            <person name="Keicho N."/>
        </authorList>
    </citation>
    <scope>NUCLEOTIDE SEQUENCE [MRNA]</scope>
    <scope>TISSUE SPECIFICITY</scope>
    <source>
        <tissue>Lung</tissue>
    </source>
</reference>
<reference key="2">
    <citation type="journal article" date="2003" name="Nature">
        <title>The DNA sequence and analysis of human chromosome 6.</title>
        <authorList>
            <person name="Mungall A.J."/>
            <person name="Palmer S.A."/>
            <person name="Sims S.K."/>
            <person name="Edwards C.A."/>
            <person name="Ashurst J.L."/>
            <person name="Wilming L."/>
            <person name="Jones M.C."/>
            <person name="Horton R."/>
            <person name="Hunt S.E."/>
            <person name="Scott C.E."/>
            <person name="Gilbert J.G.R."/>
            <person name="Clamp M.E."/>
            <person name="Bethel G."/>
            <person name="Milne S."/>
            <person name="Ainscough R."/>
            <person name="Almeida J.P."/>
            <person name="Ambrose K.D."/>
            <person name="Andrews T.D."/>
            <person name="Ashwell R.I.S."/>
            <person name="Babbage A.K."/>
            <person name="Bagguley C.L."/>
            <person name="Bailey J."/>
            <person name="Banerjee R."/>
            <person name="Barker D.J."/>
            <person name="Barlow K.F."/>
            <person name="Bates K."/>
            <person name="Beare D.M."/>
            <person name="Beasley H."/>
            <person name="Beasley O."/>
            <person name="Bird C.P."/>
            <person name="Blakey S.E."/>
            <person name="Bray-Allen S."/>
            <person name="Brook J."/>
            <person name="Brown A.J."/>
            <person name="Brown J.Y."/>
            <person name="Burford D.C."/>
            <person name="Burrill W."/>
            <person name="Burton J."/>
            <person name="Carder C."/>
            <person name="Carter N.P."/>
            <person name="Chapman J.C."/>
            <person name="Clark S.Y."/>
            <person name="Clark G."/>
            <person name="Clee C.M."/>
            <person name="Clegg S."/>
            <person name="Cobley V."/>
            <person name="Collier R.E."/>
            <person name="Collins J.E."/>
            <person name="Colman L.K."/>
            <person name="Corby N.R."/>
            <person name="Coville G.J."/>
            <person name="Culley K.M."/>
            <person name="Dhami P."/>
            <person name="Davies J."/>
            <person name="Dunn M."/>
            <person name="Earthrowl M.E."/>
            <person name="Ellington A.E."/>
            <person name="Evans K.A."/>
            <person name="Faulkner L."/>
            <person name="Francis M.D."/>
            <person name="Frankish A."/>
            <person name="Frankland J."/>
            <person name="French L."/>
            <person name="Garner P."/>
            <person name="Garnett J."/>
            <person name="Ghori M.J."/>
            <person name="Gilby L.M."/>
            <person name="Gillson C.J."/>
            <person name="Glithero R.J."/>
            <person name="Grafham D.V."/>
            <person name="Grant M."/>
            <person name="Gribble S."/>
            <person name="Griffiths C."/>
            <person name="Griffiths M.N.D."/>
            <person name="Hall R."/>
            <person name="Halls K.S."/>
            <person name="Hammond S."/>
            <person name="Harley J.L."/>
            <person name="Hart E.A."/>
            <person name="Heath P.D."/>
            <person name="Heathcott R."/>
            <person name="Holmes S.J."/>
            <person name="Howden P.J."/>
            <person name="Howe K.L."/>
            <person name="Howell G.R."/>
            <person name="Huckle E."/>
            <person name="Humphray S.J."/>
            <person name="Humphries M.D."/>
            <person name="Hunt A.R."/>
            <person name="Johnson C.M."/>
            <person name="Joy A.A."/>
            <person name="Kay M."/>
            <person name="Keenan S.J."/>
            <person name="Kimberley A.M."/>
            <person name="King A."/>
            <person name="Laird G.K."/>
            <person name="Langford C."/>
            <person name="Lawlor S."/>
            <person name="Leongamornlert D.A."/>
            <person name="Leversha M."/>
            <person name="Lloyd C.R."/>
            <person name="Lloyd D.M."/>
            <person name="Loveland J.E."/>
            <person name="Lovell J."/>
            <person name="Martin S."/>
            <person name="Mashreghi-Mohammadi M."/>
            <person name="Maslen G.L."/>
            <person name="Matthews L."/>
            <person name="McCann O.T."/>
            <person name="McLaren S.J."/>
            <person name="McLay K."/>
            <person name="McMurray A."/>
            <person name="Moore M.J.F."/>
            <person name="Mullikin J.C."/>
            <person name="Niblett D."/>
            <person name="Nickerson T."/>
            <person name="Novik K.L."/>
            <person name="Oliver K."/>
            <person name="Overton-Larty E.K."/>
            <person name="Parker A."/>
            <person name="Patel R."/>
            <person name="Pearce A.V."/>
            <person name="Peck A.I."/>
            <person name="Phillimore B.J.C.T."/>
            <person name="Phillips S."/>
            <person name="Plumb R.W."/>
            <person name="Porter K.M."/>
            <person name="Ramsey Y."/>
            <person name="Ranby S.A."/>
            <person name="Rice C.M."/>
            <person name="Ross M.T."/>
            <person name="Searle S.M."/>
            <person name="Sehra H.K."/>
            <person name="Sheridan E."/>
            <person name="Skuce C.D."/>
            <person name="Smith S."/>
            <person name="Smith M."/>
            <person name="Spraggon L."/>
            <person name="Squares S.L."/>
            <person name="Steward C.A."/>
            <person name="Sycamore N."/>
            <person name="Tamlyn-Hall G."/>
            <person name="Tester J."/>
            <person name="Theaker A.J."/>
            <person name="Thomas D.W."/>
            <person name="Thorpe A."/>
            <person name="Tracey A."/>
            <person name="Tromans A."/>
            <person name="Tubby B."/>
            <person name="Wall M."/>
            <person name="Wallis J.M."/>
            <person name="West A.P."/>
            <person name="White S.S."/>
            <person name="Whitehead S.L."/>
            <person name="Whittaker H."/>
            <person name="Wild A."/>
            <person name="Willey D.J."/>
            <person name="Wilmer T.E."/>
            <person name="Wood J.M."/>
            <person name="Wray P.W."/>
            <person name="Wyatt J.C."/>
            <person name="Young L."/>
            <person name="Younger R.M."/>
            <person name="Bentley D.R."/>
            <person name="Coulson A."/>
            <person name="Durbin R.M."/>
            <person name="Hubbard T."/>
            <person name="Sulston J.E."/>
            <person name="Dunham I."/>
            <person name="Rogers J."/>
            <person name="Beck S."/>
        </authorList>
    </citation>
    <scope>NUCLEOTIDE SEQUENCE [LARGE SCALE GENOMIC DNA]</scope>
</reference>
<comment type="subcellular location">
    <subcellularLocation>
        <location evidence="4">Secreted</location>
    </subcellularLocation>
</comment>
<comment type="tissue specificity">
    <text evidence="3">Detected in the brain, lung, spleen, thymus and prostate.</text>
</comment>
<protein>
    <recommendedName>
        <fullName>Protein PBMUCL2</fullName>
    </recommendedName>
    <alternativeName>
        <fullName>HLA complex group 22</fullName>
    </alternativeName>
    <alternativeName>
        <fullName>Panbronchiolitis-related mucin-like protein 2</fullName>
    </alternativeName>
</protein>
<feature type="signal peptide" evidence="1">
    <location>
        <begin position="1"/>
        <end position="22"/>
    </location>
</feature>
<feature type="chain" id="PRO_0000410471" description="Protein PBMUCL2">
    <location>
        <begin position="23"/>
        <end position="251"/>
    </location>
</feature>
<feature type="region of interest" description="Disordered" evidence="2">
    <location>
        <begin position="36"/>
        <end position="55"/>
    </location>
</feature>
<feature type="region of interest" description="Disordered" evidence="2">
    <location>
        <begin position="65"/>
        <end position="251"/>
    </location>
</feature>
<feature type="region of interest" description="15 X 11 AA approximate repeats">
    <location>
        <begin position="153"/>
        <end position="251"/>
    </location>
</feature>
<feature type="compositionally biased region" description="Basic and acidic residues" evidence="2">
    <location>
        <begin position="72"/>
        <end position="87"/>
    </location>
</feature>
<feature type="compositionally biased region" description="Polar residues" evidence="2">
    <location>
        <begin position="150"/>
        <end position="164"/>
    </location>
</feature>
<feature type="compositionally biased region" description="Basic and acidic residues" evidence="2">
    <location>
        <begin position="241"/>
        <end position="251"/>
    </location>
</feature>
<feature type="glycosylation site" description="N-linked (GlcNAc...) asparagine" evidence="1">
    <location>
        <position position="120"/>
    </location>
</feature>